<evidence type="ECO:0000255" key="1">
    <source>
        <dbReference type="HAMAP-Rule" id="MF_00260"/>
    </source>
</evidence>
<name>HEM3_KLEP3</name>
<proteinExistence type="inferred from homology"/>
<accession>B5XYL1</accession>
<comment type="function">
    <text evidence="1">Tetrapolymerization of the monopyrrole PBG into the hydroxymethylbilane pre-uroporphyrinogen in several discrete steps.</text>
</comment>
<comment type="catalytic activity">
    <reaction evidence="1">
        <text>4 porphobilinogen + H2O = hydroxymethylbilane + 4 NH4(+)</text>
        <dbReference type="Rhea" id="RHEA:13185"/>
        <dbReference type="ChEBI" id="CHEBI:15377"/>
        <dbReference type="ChEBI" id="CHEBI:28938"/>
        <dbReference type="ChEBI" id="CHEBI:57845"/>
        <dbReference type="ChEBI" id="CHEBI:58126"/>
        <dbReference type="EC" id="2.5.1.61"/>
    </reaction>
</comment>
<comment type="cofactor">
    <cofactor evidence="1">
        <name>dipyrromethane</name>
        <dbReference type="ChEBI" id="CHEBI:60342"/>
    </cofactor>
    <text evidence="1">Binds 1 dipyrromethane group covalently.</text>
</comment>
<comment type="pathway">
    <text evidence="1">Porphyrin-containing compound metabolism; protoporphyrin-IX biosynthesis; coproporphyrinogen-III from 5-aminolevulinate: step 2/4.</text>
</comment>
<comment type="subunit">
    <text evidence="1">Monomer.</text>
</comment>
<comment type="miscellaneous">
    <text evidence="1">The porphobilinogen subunits are added to the dipyrromethane group.</text>
</comment>
<comment type="similarity">
    <text evidence="1">Belongs to the HMBS family.</text>
</comment>
<reference key="1">
    <citation type="journal article" date="2008" name="PLoS Genet.">
        <title>Complete genome sequence of the N2-fixing broad host range endophyte Klebsiella pneumoniae 342 and virulence predictions verified in mice.</title>
        <authorList>
            <person name="Fouts D.E."/>
            <person name="Tyler H.L."/>
            <person name="DeBoy R.T."/>
            <person name="Daugherty S."/>
            <person name="Ren Q."/>
            <person name="Badger J.H."/>
            <person name="Durkin A.S."/>
            <person name="Huot H."/>
            <person name="Shrivastava S."/>
            <person name="Kothari S."/>
            <person name="Dodson R.J."/>
            <person name="Mohamoud Y."/>
            <person name="Khouri H."/>
            <person name="Roesch L.F.W."/>
            <person name="Krogfelt K.A."/>
            <person name="Struve C."/>
            <person name="Triplett E.W."/>
            <person name="Methe B.A."/>
        </authorList>
    </citation>
    <scope>NUCLEOTIDE SEQUENCE [LARGE SCALE GENOMIC DNA]</scope>
    <source>
        <strain>342</strain>
    </source>
</reference>
<sequence length="313" mass="33726">MLDKVLKIATRQSPLALWQAQYVKARLEQAHPGLNVELVPMVTRGDVILDTPLAKVGGKGLFVKELELAMLEGRADIAVHSMKDVPVEFPEGLGLVTICERDDPRDAFVSNHYASIDELPAGSVVGTSSLRRQCQLAATRPDLVIRSLRGNVGTRLSKLDNGEYDAIILAAAGLKRLKLEARIRQPLSPEQSLPAVGQGAVGIECRLDDAWTQALLAPLNHAETAVRVRAERAMNTRLEGGCQVPIGSYAELVNGELWLRALVGAPDGSQMVRGERRGPAEQAEALGISLAEELLDNGARDILAAVYDGEAPR</sequence>
<dbReference type="EC" id="2.5.1.61" evidence="1"/>
<dbReference type="EMBL" id="CP000964">
    <property type="protein sequence ID" value="ACI10913.1"/>
    <property type="molecule type" value="Genomic_DNA"/>
</dbReference>
<dbReference type="SMR" id="B5XYL1"/>
<dbReference type="KEGG" id="kpe:KPK_5374"/>
<dbReference type="HOGENOM" id="CLU_019704_0_2_6"/>
<dbReference type="UniPathway" id="UPA00251">
    <property type="reaction ID" value="UER00319"/>
</dbReference>
<dbReference type="Proteomes" id="UP000001734">
    <property type="component" value="Chromosome"/>
</dbReference>
<dbReference type="GO" id="GO:0005737">
    <property type="term" value="C:cytoplasm"/>
    <property type="evidence" value="ECO:0007669"/>
    <property type="project" value="TreeGrafter"/>
</dbReference>
<dbReference type="GO" id="GO:0004418">
    <property type="term" value="F:hydroxymethylbilane synthase activity"/>
    <property type="evidence" value="ECO:0007669"/>
    <property type="project" value="UniProtKB-UniRule"/>
</dbReference>
<dbReference type="GO" id="GO:0006782">
    <property type="term" value="P:protoporphyrinogen IX biosynthetic process"/>
    <property type="evidence" value="ECO:0007669"/>
    <property type="project" value="UniProtKB-UniRule"/>
</dbReference>
<dbReference type="CDD" id="cd13646">
    <property type="entry name" value="PBP2_EcHMBS_like"/>
    <property type="match status" value="1"/>
</dbReference>
<dbReference type="FunFam" id="3.30.160.40:FF:000002">
    <property type="entry name" value="Porphobilinogen deaminase"/>
    <property type="match status" value="1"/>
</dbReference>
<dbReference type="FunFam" id="3.40.190.10:FF:000004">
    <property type="entry name" value="Porphobilinogen deaminase"/>
    <property type="match status" value="1"/>
</dbReference>
<dbReference type="FunFam" id="3.40.190.10:FF:000005">
    <property type="entry name" value="Porphobilinogen deaminase"/>
    <property type="match status" value="1"/>
</dbReference>
<dbReference type="Gene3D" id="3.40.190.10">
    <property type="entry name" value="Periplasmic binding protein-like II"/>
    <property type="match status" value="2"/>
</dbReference>
<dbReference type="Gene3D" id="3.30.160.40">
    <property type="entry name" value="Porphobilinogen deaminase, C-terminal domain"/>
    <property type="match status" value="1"/>
</dbReference>
<dbReference type="HAMAP" id="MF_00260">
    <property type="entry name" value="Porphobil_deam"/>
    <property type="match status" value="1"/>
</dbReference>
<dbReference type="InterPro" id="IPR000860">
    <property type="entry name" value="HemC"/>
</dbReference>
<dbReference type="InterPro" id="IPR022419">
    <property type="entry name" value="Porphobilin_deaminase_cofac_BS"/>
</dbReference>
<dbReference type="InterPro" id="IPR022417">
    <property type="entry name" value="Porphobilin_deaminase_N"/>
</dbReference>
<dbReference type="InterPro" id="IPR022418">
    <property type="entry name" value="Porphobilinogen_deaminase_C"/>
</dbReference>
<dbReference type="InterPro" id="IPR036803">
    <property type="entry name" value="Porphobilinogen_deaminase_C_sf"/>
</dbReference>
<dbReference type="NCBIfam" id="TIGR00212">
    <property type="entry name" value="hemC"/>
    <property type="match status" value="1"/>
</dbReference>
<dbReference type="PANTHER" id="PTHR11557">
    <property type="entry name" value="PORPHOBILINOGEN DEAMINASE"/>
    <property type="match status" value="1"/>
</dbReference>
<dbReference type="PANTHER" id="PTHR11557:SF0">
    <property type="entry name" value="PORPHOBILINOGEN DEAMINASE"/>
    <property type="match status" value="1"/>
</dbReference>
<dbReference type="Pfam" id="PF01379">
    <property type="entry name" value="Porphobil_deam"/>
    <property type="match status" value="1"/>
</dbReference>
<dbReference type="Pfam" id="PF03900">
    <property type="entry name" value="Porphobil_deamC"/>
    <property type="match status" value="1"/>
</dbReference>
<dbReference type="PIRSF" id="PIRSF001438">
    <property type="entry name" value="4pyrrol_synth_OHMeBilane_synth"/>
    <property type="match status" value="1"/>
</dbReference>
<dbReference type="PRINTS" id="PR00151">
    <property type="entry name" value="PORPHBDMNASE"/>
</dbReference>
<dbReference type="SUPFAM" id="SSF53850">
    <property type="entry name" value="Periplasmic binding protein-like II"/>
    <property type="match status" value="1"/>
</dbReference>
<dbReference type="SUPFAM" id="SSF54782">
    <property type="entry name" value="Porphobilinogen deaminase (hydroxymethylbilane synthase), C-terminal domain"/>
    <property type="match status" value="1"/>
</dbReference>
<dbReference type="PROSITE" id="PS00533">
    <property type="entry name" value="PORPHOBILINOGEN_DEAM"/>
    <property type="match status" value="1"/>
</dbReference>
<feature type="chain" id="PRO_1000114160" description="Porphobilinogen deaminase">
    <location>
        <begin position="1"/>
        <end position="313"/>
    </location>
</feature>
<feature type="modified residue" description="S-(dipyrrolylmethanemethyl)cysteine" evidence="1">
    <location>
        <position position="242"/>
    </location>
</feature>
<keyword id="KW-0627">Porphyrin biosynthesis</keyword>
<keyword id="KW-0808">Transferase</keyword>
<organism>
    <name type="scientific">Klebsiella pneumoniae (strain 342)</name>
    <dbReference type="NCBI Taxonomy" id="507522"/>
    <lineage>
        <taxon>Bacteria</taxon>
        <taxon>Pseudomonadati</taxon>
        <taxon>Pseudomonadota</taxon>
        <taxon>Gammaproteobacteria</taxon>
        <taxon>Enterobacterales</taxon>
        <taxon>Enterobacteriaceae</taxon>
        <taxon>Klebsiella/Raoultella group</taxon>
        <taxon>Klebsiella</taxon>
        <taxon>Klebsiella pneumoniae complex</taxon>
    </lineage>
</organism>
<protein>
    <recommendedName>
        <fullName evidence="1">Porphobilinogen deaminase</fullName>
        <shortName evidence="1">PBG</shortName>
        <ecNumber evidence="1">2.5.1.61</ecNumber>
    </recommendedName>
    <alternativeName>
        <fullName evidence="1">Hydroxymethylbilane synthase</fullName>
        <shortName evidence="1">HMBS</shortName>
    </alternativeName>
    <alternativeName>
        <fullName evidence="1">Pre-uroporphyrinogen synthase</fullName>
    </alternativeName>
</protein>
<gene>
    <name evidence="1" type="primary">hemC</name>
    <name type="ordered locus">KPK_5374</name>
</gene>